<comment type="function">
    <text evidence="1 2">Responsible for RNA synthesis (replicase and transcriptase), cap addition, and cap methylation. Also performs the polyadenylation of subgenomic mRNAs by a stuttering mechanism at a slipery stop site present at the end of viral genes. The template is composed of the viral RNA tightly encapsidated by the nucleoprotein (N). The viral polymerase binds to the genomic RNA at two different sites in the 3' leader promoter thereby initiating either genome replication or mRNA transcription. In the transcription mode, the polymerase performs the sequential transcription of all mRNAs using a termination-reinitiation mechanism responding to gene start and gene end signals. Some polymerase disengage from the template at each gene junction, resulting in a decreasing abundance of transcripts from the 3' to the 5' end of the genome. The first gene is the most transcribed, and the last the least transcribed. Needs as cofactors the phosphoprotein for processivity and the M2-1 anti-termination protein. Polyribonucleotidyl transferase (PRNTase) adds the cap structure when the nascent RNA chain length has reached few nucleotides (By similarity). Ribose 2'-O methylation of viral mRNA cap precedes and facilitates subsequent guanine-N-7 methylation (By similarity). In the replication mode, the polymerase replicates the whole viral genome without recognizing the gene end transcriptional signals. The ability of the polymerase to override the gene end signals as it is producing the antigenome is probably due to replicative RNA becoming encapsidated with nucleoprotein as it is synthesized (By similarity).</text>
</comment>
<comment type="catalytic activity">
    <reaction evidence="4">
        <text>RNA(n) + a ribonucleoside 5'-triphosphate = RNA(n+1) + diphosphate</text>
        <dbReference type="Rhea" id="RHEA:21248"/>
        <dbReference type="Rhea" id="RHEA-COMP:14527"/>
        <dbReference type="Rhea" id="RHEA-COMP:17342"/>
        <dbReference type="ChEBI" id="CHEBI:33019"/>
        <dbReference type="ChEBI" id="CHEBI:61557"/>
        <dbReference type="ChEBI" id="CHEBI:140395"/>
        <dbReference type="EC" id="2.7.7.48"/>
    </reaction>
</comment>
<comment type="catalytic activity">
    <reaction evidence="2">
        <text>GTP + H2O = GDP + phosphate + H(+)</text>
        <dbReference type="Rhea" id="RHEA:19669"/>
        <dbReference type="ChEBI" id="CHEBI:15377"/>
        <dbReference type="ChEBI" id="CHEBI:15378"/>
        <dbReference type="ChEBI" id="CHEBI:37565"/>
        <dbReference type="ChEBI" id="CHEBI:43474"/>
        <dbReference type="ChEBI" id="CHEBI:58189"/>
    </reaction>
</comment>
<comment type="catalytic activity">
    <reaction evidence="2">
        <text>a 5'-end triphospho-adenylyl-adenylyl-cytidylyl-adenosine in mRNA + GDP + H(+) = a 5'-end (5'-triphosphoguanosine)-adenylyl-adenylyl-cytidylyl-adenosine in mRNA + diphosphate</text>
        <dbReference type="Rhea" id="RHEA:65436"/>
        <dbReference type="Rhea" id="RHEA-COMP:16797"/>
        <dbReference type="Rhea" id="RHEA-COMP:16799"/>
        <dbReference type="ChEBI" id="CHEBI:15378"/>
        <dbReference type="ChEBI" id="CHEBI:33019"/>
        <dbReference type="ChEBI" id="CHEBI:58189"/>
        <dbReference type="ChEBI" id="CHEBI:156484"/>
        <dbReference type="ChEBI" id="CHEBI:156503"/>
        <dbReference type="EC" id="2.7.7.88"/>
    </reaction>
</comment>
<comment type="catalytic activity">
    <reaction evidence="1">
        <text>a 5'-end (5'-triphosphoguanosine)-adenylyl-adenylyl-cytidylyl-adenosine in mRNA + 2 S-adenosyl-L-methionine = a 5'-end (N(7)-methyl 5'-triphosphoguanosine)-(2'-O-methyladenylyl)-adenylyl-cytidylyl-adenosine in mRNA + 2 S-adenosyl-L-homocysteine + H(+)</text>
        <dbReference type="Rhea" id="RHEA:65376"/>
        <dbReference type="Rhea" id="RHEA-COMP:16797"/>
        <dbReference type="Rhea" id="RHEA-COMP:16798"/>
        <dbReference type="ChEBI" id="CHEBI:15378"/>
        <dbReference type="ChEBI" id="CHEBI:57856"/>
        <dbReference type="ChEBI" id="CHEBI:59789"/>
        <dbReference type="ChEBI" id="CHEBI:156483"/>
        <dbReference type="ChEBI" id="CHEBI:156484"/>
        <dbReference type="EC" id="2.1.1.375"/>
    </reaction>
</comment>
<comment type="catalytic activity">
    <reaction evidence="1">
        <text>a 5'-end (5'-triphosphoguanosine)-adenylyl-adenylyl-cytidylyl-adenosine in mRNA + S-adenosyl-L-methionine = a 5'-end (5'-triphosphoguanosine)-(2'-O-methyladenylyl)-adenylyl-cytidylyl-adenosine in mRNA + S-adenosyl-L-homocysteine + H(+)</text>
        <dbReference type="Rhea" id="RHEA:65380"/>
        <dbReference type="Rhea" id="RHEA-COMP:16797"/>
        <dbReference type="Rhea" id="RHEA-COMP:16801"/>
        <dbReference type="ChEBI" id="CHEBI:15378"/>
        <dbReference type="ChEBI" id="CHEBI:57856"/>
        <dbReference type="ChEBI" id="CHEBI:59789"/>
        <dbReference type="ChEBI" id="CHEBI:156482"/>
        <dbReference type="ChEBI" id="CHEBI:156484"/>
    </reaction>
</comment>
<comment type="catalytic activity">
    <reaction evidence="1">
        <text>a 5'-end (5'-triphosphoguanosine)-(2'-O-methyladenylyl)-adenylyl-cytidylyl-adenosine in mRNA + S-adenosyl-L-methionine = a 5'-end (N(7)-methyl 5'-triphosphoguanosine)-(2'-O-methyladenylyl)-adenylyl-cytidylyl-adenosine in mRNA + S-adenosyl-L-homocysteine</text>
        <dbReference type="Rhea" id="RHEA:65440"/>
        <dbReference type="Rhea" id="RHEA-COMP:16798"/>
        <dbReference type="Rhea" id="RHEA-COMP:16801"/>
        <dbReference type="ChEBI" id="CHEBI:57856"/>
        <dbReference type="ChEBI" id="CHEBI:59789"/>
        <dbReference type="ChEBI" id="CHEBI:156482"/>
        <dbReference type="ChEBI" id="CHEBI:156483"/>
    </reaction>
</comment>
<comment type="cofactor">
    <cofactor evidence="2">
        <name>Mg(2+)</name>
        <dbReference type="ChEBI" id="CHEBI:18420"/>
    </cofactor>
    <text evidence="2">For RNA-directed RNA polymerase activity. Mn(2+) can stimulate de novo initiation but it is inefficient at supporting elongation of de novo initiated RNA.</text>
</comment>
<comment type="subunit">
    <text evidence="2">Interacts with the phosphoprotein (via C-terminus); the association of P and L forms the polymerase complex.</text>
</comment>
<comment type="subcellular location">
    <subcellularLocation>
        <location evidence="2">Virion</location>
    </subcellularLocation>
    <subcellularLocation>
        <location evidence="2">Host cytoplasm</location>
    </subcellularLocation>
    <text evidence="2">Localizes in cytoplasmic inclusion bodies.</text>
</comment>
<comment type="domain">
    <text evidence="2">Contains an RNA-dependent RNA polymerase (RdRp) domain, a polyribonucleotidyl transferase (PRNTase or capping) domain and a methyltransferase (MTase) domain.</text>
</comment>
<comment type="similarity">
    <text evidence="6">Belongs to the paramyxovirus L protein family.</text>
</comment>
<comment type="sequence caution" evidence="6">
    <conflict type="frameshift">
        <sequence resource="EMBL-CDS" id="AAY82583"/>
    </conflict>
</comment>
<keyword id="KW-0067">ATP-binding</keyword>
<keyword id="KW-1035">Host cytoplasm</keyword>
<keyword id="KW-0378">Hydrolase</keyword>
<keyword id="KW-0460">Magnesium</keyword>
<keyword id="KW-0479">Metal-binding</keyword>
<keyword id="KW-0489">Methyltransferase</keyword>
<keyword id="KW-0506">mRNA capping</keyword>
<keyword id="KW-0507">mRNA processing</keyword>
<keyword id="KW-0511">Multifunctional enzyme</keyword>
<keyword id="KW-0547">Nucleotide-binding</keyword>
<keyword id="KW-0548">Nucleotidyltransferase</keyword>
<keyword id="KW-1185">Reference proteome</keyword>
<keyword id="KW-0696">RNA-directed RNA polymerase</keyword>
<keyword id="KW-0949">S-adenosyl-L-methionine</keyword>
<keyword id="KW-0808">Transferase</keyword>
<keyword id="KW-0693">Viral RNA replication</keyword>
<keyword id="KW-0946">Virion</keyword>
<protein>
    <recommendedName>
        <fullName>RNA-directed RNA polymerase L</fullName>
        <shortName>Protein L</shortName>
    </recommendedName>
    <alternativeName>
        <fullName>Large structural protein</fullName>
    </alternativeName>
    <alternativeName>
        <fullName>Replicase</fullName>
    </alternativeName>
    <alternativeName>
        <fullName>Transcriptase</fullName>
    </alternativeName>
    <domain>
        <recommendedName>
            <fullName>RNA-directed RNA polymerase</fullName>
            <ecNumber evidence="2">2.7.7.48</ecNumber>
        </recommendedName>
    </domain>
    <domain>
        <recommendedName>
            <fullName evidence="2">GTP phosphohydrolase</fullName>
            <ecNumber evidence="2">3.6.1.-</ecNumber>
        </recommendedName>
    </domain>
    <domain>
        <recommendedName>
            <fullName evidence="6">GDP polyribonucleotidyltransferase</fullName>
            <ecNumber evidence="2">2.7.7.88</ecNumber>
        </recommendedName>
        <alternativeName>
            <fullName evidence="6">PRNTase</fullName>
        </alternativeName>
    </domain>
    <domain>
        <recommendedName>
            <fullName evidence="6">mRNA cap methyltransferase</fullName>
            <ecNumber evidence="1">2.1.1.375</ecNumber>
        </recommendedName>
        <alternativeName>
            <fullName evidence="1">mRNA (guanine-N(7)-)-methyltransferase</fullName>
            <shortName evidence="1">G-N7-MTase</shortName>
        </alternativeName>
        <alternativeName>
            <fullName evidence="1">mRNA (nucleoside-2'-O-)-methyltransferase</fullName>
            <shortName evidence="1">N1-2'-O-MTase</shortName>
        </alternativeName>
    </domain>
</protein>
<reference key="1">
    <citation type="journal article" date="2004" name="Avian Dis.">
        <title>Evidence of avian pneumovirus spread beyond Minnesota among wild and domestic birds in central North America.</title>
        <authorList>
            <person name="Bennett R.S."/>
            <person name="Nezworski J."/>
            <person name="Velayudhan B.T."/>
            <person name="Nagaraja K.V."/>
            <person name="Zeman D.H."/>
            <person name="Dyer N."/>
            <person name="Graham T."/>
            <person name="Lauer D.C."/>
            <person name="Njenga M.K."/>
            <person name="Halvorson D.A."/>
        </authorList>
    </citation>
    <scope>NUCLEOTIDE SEQUENCE [GENOMIC RNA]</scope>
</reference>
<reference key="2">
    <citation type="journal article" date="2005" name="J. Virol.">
        <title>A wild goose metapneumovirus containing a large attachment glycoprotein is avirulent but immunoprotective in domestic turkeys.</title>
        <authorList>
            <person name="Bennett R.S."/>
            <person name="LaRue R."/>
            <person name="Shaw D."/>
            <person name="Yu Q."/>
            <person name="Nagaraja K.V."/>
            <person name="Halvorson D.A."/>
            <person name="Njenga M.K."/>
        </authorList>
    </citation>
    <scope>NUCLEOTIDE SEQUENCE [GENOMIC RNA]</scope>
</reference>
<organism>
    <name type="scientific">Avian metapneumovirus (isolate Canada goose/Minnesota/15a/2001)</name>
    <name type="common">AMPV</name>
    <dbReference type="NCBI Taxonomy" id="652954"/>
    <lineage>
        <taxon>Viruses</taxon>
        <taxon>Riboviria</taxon>
        <taxon>Orthornavirae</taxon>
        <taxon>Negarnaviricota</taxon>
        <taxon>Haploviricotina</taxon>
        <taxon>Monjiviricetes</taxon>
        <taxon>Mononegavirales</taxon>
        <taxon>Pneumoviridae</taxon>
        <taxon>Metapneumovirus</taxon>
        <taxon>Metapneumovirus avis</taxon>
    </lineage>
</organism>
<sequence>MDPLNEGVVNVYLTDSYLKGVISFSETNAIGSCLLGKHYLKKDNTSKVAIESPVVEHIRLRNAFQTRIKEKNLRVVEPVNMQSEVMRNSYTCELNLLKQLITRSKDISSLKLDMICDWLQLKSTSENPSVLKFVDVRCIPDWVSTWFSSWYNLNKLILEFRREEVACTGSIICKTIGSIMFIISSFGCVIKSNKSKRISFMTYNQVLTWKDVMLSRFNANLCVWISNSLNKNQEGLGLRSNLQGALVNKLYEIVDSMLSVCSNEGFTLVKEFEGFIMSEILKITEHAQFSTRFRNTLLNGLVDQLAKMRGLNRKRVSGTVLEGNQYPMYETTLATLGGALKTIRLLVNKNLDNAAELYYIFRIFGHPMVEEREAMDAVRLNNEITKILKLESLTELRGAFILRIIKGFVDTNKRWPKIKNLKVLSRRWIMYFKAKSYPSQLELSSQDFLELAGVQFEQEFAIPERTNLEMVLNDKAISPPKNLIWSVFPKNYLPTNIRERFTEEMFNSSEKLKTRRVLEYYLKDNKFDQNDLKKYVVRQEYLGDKEHVVSLTGKERELSVGRMFAMQPGKQRQVQILAEKLLADNIVPFFPETLTKYGDLELQRIMEIKSELSSVKSRRNDSYNNYIARASIVTDLSKFNQAFRYETSSVCADVVDELHGTQSLFCWLHLTVPLTTMICTYRHAPPETEGVYDIDKIKEQSGLYRFHMGGIEGWCQKLWTMEAVSLLDVVSVKNRVQLTSLLNGDNQSIDVSKPVRLSQGVDEVKADYSLAVKMLKEIRNAYKDIGHKLKEGETYISRDLQFMSKVIQSEGVMHPSPIKKILRVGPWINTILDDIKTSAESIGSLCQELEFRGESLLVSLILRNFWLYELWMHESKSHPLAGKQLYRQLSKTLAITQKFFGITKETDVVNLWMNVPMQFGGGDPVVLYRSFYRRTPDFLTEAVSHMSVLLKVYGKAKEGSKKDFFKALLSVDKNKRATLTTLMRDPQAVGSERQARVTSEINRAAVTSVLSLSPNQLFCDSAIHYSRNEEEVGLIAQNITPVYPHGLRVLYESLPFHKAEKVVNMISGTKSITNLLQRTSAINGEDIDRAVSMMLENLGLLSRILSVCQDDITLPTKANGDLICCQVSRTLRERSWDNMEIVGVTSPSIVTCMNIVYSSSSQLKGITIEKFSTDKTTRGQRGPKSPWVGSSTQEKKLVPVYNRQILSKQQKEQLEAIGKLRWVYKGTQGLRRLLDKICIGSLGISYKNVKPLLPRFMSVNFLHRLSVSSRPMEFPASVPAYRTTNYHFDTSPVNQTLSERFGNEDINLVFQNAISCGISVMSVVEQLTGRSPKQLVMIPQLEEIDIMPPPVFLGKFDYKLVEKISSDQHIFSPDKLDLVTLGKMLMPSTSGAKSDQFWNRKENFFHGNNLVESLSAALACHWCGILTEQCNENNIFRREWGDGFVTDHAFIDFKTFVGVFKTKLLCGWGSRGGDIKDRDMIDESIDKLIRVDNSFWRMFSKVILEPKVRKRVMLFDVKILSLVGYAGFKNWFIDHLRSSDLCEVPWVVNADSEIVEVSAVKIYLQLLRVSSPLRITVLNYSDMAHAITRLIRRKSMHDNVPSISRTLSPAELAPVVEPTVQMNLFPKITFERLKNYETVSGSTRGKLTRNYMVMLPWQHINRFNFVFSSTGCKISVKACIGRLIQDLNPTVFYFVGEGAGNWMARTACEYPNAKFVYRSLKDDLDHHFPLEFQRVLGNMNRVIDGGEGLSMDTTDATQKTHWDLIHRICKDALLITLCDAEFKDRDDFFKMVTLWRKHVLSCRICTTYGTDLYLFAKYHAKEQSIKLPYFVRSIATYVMQGSKLSGSECYVLLTLGHHNNLPCHGEVQSSKLKLAVCNDFSIPRKVEVKAVEANCKSLLSGLRTPINRAELDRQKKMLTLRSYHSSVATVGGSRVIESKWLSKKATTIIEWLEHILNSPKGELNYDFFEALENTYPNMVKLLDNLGSAELKKLIKVTGYMLMSKK</sequence>
<name>L_AMPV1</name>
<accession>Q2Y2L8</accession>
<evidence type="ECO:0000250" key="1">
    <source>
        <dbReference type="UniProtKB" id="P03523"/>
    </source>
</evidence>
<evidence type="ECO:0000250" key="2">
    <source>
        <dbReference type="UniProtKB" id="P28887"/>
    </source>
</evidence>
<evidence type="ECO:0000250" key="3">
    <source>
        <dbReference type="UniProtKB" id="Q6WB93"/>
    </source>
</evidence>
<evidence type="ECO:0000255" key="4">
    <source>
        <dbReference type="PROSITE-ProRule" id="PRU00539"/>
    </source>
</evidence>
<evidence type="ECO:0000255" key="5">
    <source>
        <dbReference type="PROSITE-ProRule" id="PRU00923"/>
    </source>
</evidence>
<evidence type="ECO:0000305" key="6"/>
<gene>
    <name type="primary">L</name>
</gene>
<feature type="chain" id="PRO_0000390364" description="RNA-directed RNA polymerase L">
    <location>
        <begin position="1"/>
        <end position="2005"/>
    </location>
</feature>
<feature type="domain" description="RdRp catalytic" evidence="4">
    <location>
        <begin position="628"/>
        <end position="811"/>
    </location>
</feature>
<feature type="domain" description="Mononegavirus-type SAM-dependent 2'-O-MTase" evidence="5">
    <location>
        <begin position="1662"/>
        <end position="1857"/>
    </location>
</feature>
<feature type="region of interest" description="GDP polyribonucleotidyltransferase" evidence="2">
    <location>
        <begin position="902"/>
        <end position="1379"/>
    </location>
</feature>
<feature type="active site" description="Nucleophile; for GDP polyribonucleotidyltransferase activity" evidence="1">
    <location>
        <position position="1263"/>
    </location>
</feature>
<feature type="active site" description="For mRNA (nucleoside-2'-O-)-methyltransferase activity" evidence="3">
    <location>
        <position position="1673"/>
    </location>
</feature>
<feature type="active site" description="For mRNA (nucleoside-2'-O-)-methyltransferase activity" evidence="3">
    <location>
        <position position="1779"/>
    </location>
</feature>
<feature type="active site" description="For mRNA (nucleoside-2'-O-)-methyltransferase activity" evidence="3">
    <location>
        <position position="1817"/>
    </location>
</feature>
<feature type="active site" description="For mRNA (nucleoside-2'-O-)-methyltransferase activity" evidence="3">
    <location>
        <position position="1848"/>
    </location>
</feature>
<feature type="binding site" evidence="2">
    <location>
        <position position="635"/>
    </location>
    <ligand>
        <name>Mg(2+)</name>
        <dbReference type="ChEBI" id="CHEBI:18420"/>
        <note>catalytic; for RNA-directed RNA polymerase activity</note>
    </ligand>
</feature>
<feature type="binding site" evidence="2">
    <location>
        <position position="745"/>
    </location>
    <ligand>
        <name>Mg(2+)</name>
        <dbReference type="ChEBI" id="CHEBI:18420"/>
        <note>catalytic; for RNA-directed RNA polymerase activity</note>
    </ligand>
</feature>
<feature type="binding site" evidence="3">
    <location>
        <begin position="1696"/>
        <end position="1700"/>
    </location>
    <ligand>
        <name>substrate</name>
        <note>for mRNA (nucleoside-2'-O-)-methyltransferase activity</note>
    </ligand>
</feature>
<dbReference type="EC" id="2.7.7.48" evidence="2"/>
<dbReference type="EC" id="3.6.1.-" evidence="2"/>
<dbReference type="EC" id="2.7.7.88" evidence="2"/>
<dbReference type="EC" id="2.1.1.375" evidence="1"/>
<dbReference type="EMBL" id="DQ009484">
    <property type="protein sequence ID" value="AAY82583.1"/>
    <property type="status" value="ALT_FRAME"/>
    <property type="molecule type" value="Viral_cRNA"/>
</dbReference>
<dbReference type="RefSeq" id="YP_443845.1">
    <property type="nucleotide sequence ID" value="NC_007652.1"/>
</dbReference>
<dbReference type="SMR" id="Q2Y2L8"/>
<dbReference type="Proteomes" id="UP000002471">
    <property type="component" value="Segment"/>
</dbReference>
<dbReference type="GO" id="GO:0030430">
    <property type="term" value="C:host cell cytoplasm"/>
    <property type="evidence" value="ECO:0007669"/>
    <property type="project" value="UniProtKB-SubCell"/>
</dbReference>
<dbReference type="GO" id="GO:0044423">
    <property type="term" value="C:virion component"/>
    <property type="evidence" value="ECO:0007669"/>
    <property type="project" value="UniProtKB-KW"/>
</dbReference>
<dbReference type="GO" id="GO:0005524">
    <property type="term" value="F:ATP binding"/>
    <property type="evidence" value="ECO:0007669"/>
    <property type="project" value="UniProtKB-KW"/>
</dbReference>
<dbReference type="GO" id="GO:0003924">
    <property type="term" value="F:GTPase activity"/>
    <property type="evidence" value="ECO:0007669"/>
    <property type="project" value="RHEA"/>
</dbReference>
<dbReference type="GO" id="GO:0046872">
    <property type="term" value="F:metal ion binding"/>
    <property type="evidence" value="ECO:0007669"/>
    <property type="project" value="UniProtKB-KW"/>
</dbReference>
<dbReference type="GO" id="GO:0004482">
    <property type="term" value="F:mRNA 5'-cap (guanine-N7-)-methyltransferase activity"/>
    <property type="evidence" value="ECO:0007669"/>
    <property type="project" value="InterPro"/>
</dbReference>
<dbReference type="GO" id="GO:0003968">
    <property type="term" value="F:RNA-directed RNA polymerase activity"/>
    <property type="evidence" value="ECO:0007669"/>
    <property type="project" value="UniProtKB-KW"/>
</dbReference>
<dbReference type="InterPro" id="IPR039530">
    <property type="entry name" value="L_methyltransferase_rhabdo"/>
</dbReference>
<dbReference type="InterPro" id="IPR039736">
    <property type="entry name" value="L_poly_C"/>
</dbReference>
<dbReference type="InterPro" id="IPR026890">
    <property type="entry name" value="Mononeg_mRNAcap"/>
</dbReference>
<dbReference type="InterPro" id="IPR014023">
    <property type="entry name" value="Mononeg_RNA_pol_cat"/>
</dbReference>
<dbReference type="InterPro" id="IPR025786">
    <property type="entry name" value="Mononega_L_MeTrfase"/>
</dbReference>
<dbReference type="NCBIfam" id="TIGR04198">
    <property type="entry name" value="paramyx_RNAcap"/>
    <property type="match status" value="1"/>
</dbReference>
<dbReference type="Pfam" id="PF14314">
    <property type="entry name" value="Methyltrans_Mon_2nd"/>
    <property type="match status" value="1"/>
</dbReference>
<dbReference type="Pfam" id="PF14318">
    <property type="entry name" value="Mononeg_mRNAcap"/>
    <property type="match status" value="1"/>
</dbReference>
<dbReference type="Pfam" id="PF00946">
    <property type="entry name" value="Mononeg_RNA_pol"/>
    <property type="match status" value="1"/>
</dbReference>
<dbReference type="PROSITE" id="PS50526">
    <property type="entry name" value="RDRP_SSRNA_NEG_NONSEG"/>
    <property type="match status" value="1"/>
</dbReference>
<dbReference type="PROSITE" id="PS51590">
    <property type="entry name" value="SAM_MT_MNV_L"/>
    <property type="match status" value="1"/>
</dbReference>
<organismHost>
    <name type="scientific">Anser sp.</name>
    <name type="common">goose</name>
    <dbReference type="NCBI Taxonomy" id="8847"/>
</organismHost>
<organismHost>
    <name type="scientific">Meleagris gallopavo</name>
    <name type="common">Wild turkey</name>
    <dbReference type="NCBI Taxonomy" id="9103"/>
</organismHost>
<proteinExistence type="inferred from homology"/>